<dbReference type="EC" id="2.3.1.274" evidence="1"/>
<dbReference type="EMBL" id="CP000016">
    <property type="protein sequence ID" value="AAZ41043.1"/>
    <property type="molecule type" value="Genomic_DNA"/>
</dbReference>
<dbReference type="RefSeq" id="WP_011282952.1">
    <property type="nucleotide sequence ID" value="NC_007292.1"/>
</dbReference>
<dbReference type="SMR" id="Q492Q3"/>
<dbReference type="STRING" id="291272.BPEN_419"/>
<dbReference type="KEGG" id="bpn:BPEN_419"/>
<dbReference type="eggNOG" id="COG0416">
    <property type="taxonomic scope" value="Bacteria"/>
</dbReference>
<dbReference type="HOGENOM" id="CLU_039379_1_0_6"/>
<dbReference type="OrthoDB" id="9806408at2"/>
<dbReference type="UniPathway" id="UPA00085"/>
<dbReference type="Proteomes" id="UP000007794">
    <property type="component" value="Chromosome"/>
</dbReference>
<dbReference type="GO" id="GO:0005737">
    <property type="term" value="C:cytoplasm"/>
    <property type="evidence" value="ECO:0007669"/>
    <property type="project" value="UniProtKB-SubCell"/>
</dbReference>
<dbReference type="GO" id="GO:0043811">
    <property type="term" value="F:phosphate:acyl-[acyl carrier protein] acyltransferase activity"/>
    <property type="evidence" value="ECO:0007669"/>
    <property type="project" value="UniProtKB-UniRule"/>
</dbReference>
<dbReference type="GO" id="GO:0006633">
    <property type="term" value="P:fatty acid biosynthetic process"/>
    <property type="evidence" value="ECO:0007669"/>
    <property type="project" value="UniProtKB-UniRule"/>
</dbReference>
<dbReference type="GO" id="GO:0008654">
    <property type="term" value="P:phospholipid biosynthetic process"/>
    <property type="evidence" value="ECO:0007669"/>
    <property type="project" value="UniProtKB-KW"/>
</dbReference>
<dbReference type="Gene3D" id="3.40.718.10">
    <property type="entry name" value="Isopropylmalate Dehydrogenase"/>
    <property type="match status" value="1"/>
</dbReference>
<dbReference type="HAMAP" id="MF_00019">
    <property type="entry name" value="PlsX"/>
    <property type="match status" value="1"/>
</dbReference>
<dbReference type="InterPro" id="IPR003664">
    <property type="entry name" value="FA_synthesis"/>
</dbReference>
<dbReference type="InterPro" id="IPR012281">
    <property type="entry name" value="Phospholipid_synth_PlsX-like"/>
</dbReference>
<dbReference type="NCBIfam" id="TIGR00182">
    <property type="entry name" value="plsX"/>
    <property type="match status" value="1"/>
</dbReference>
<dbReference type="PANTHER" id="PTHR30100">
    <property type="entry name" value="FATTY ACID/PHOSPHOLIPID SYNTHESIS PROTEIN PLSX"/>
    <property type="match status" value="1"/>
</dbReference>
<dbReference type="PANTHER" id="PTHR30100:SF1">
    <property type="entry name" value="PHOSPHATE ACYLTRANSFERASE"/>
    <property type="match status" value="1"/>
</dbReference>
<dbReference type="Pfam" id="PF02504">
    <property type="entry name" value="FA_synthesis"/>
    <property type="match status" value="1"/>
</dbReference>
<dbReference type="PIRSF" id="PIRSF002465">
    <property type="entry name" value="Phsphlp_syn_PlsX"/>
    <property type="match status" value="1"/>
</dbReference>
<dbReference type="SUPFAM" id="SSF53659">
    <property type="entry name" value="Isocitrate/Isopropylmalate dehydrogenase-like"/>
    <property type="match status" value="1"/>
</dbReference>
<reference key="1">
    <citation type="journal article" date="2005" name="Genome Res.">
        <title>Genome sequence of Blochmannia pennsylvanicus indicates parallel evolutionary trends among bacterial mutualists of insects.</title>
        <authorList>
            <person name="Degnan P.H."/>
            <person name="Lazarus A.B."/>
            <person name="Wernegreen J.J."/>
        </authorList>
    </citation>
    <scope>NUCLEOTIDE SEQUENCE [LARGE SCALE GENOMIC DNA]</scope>
    <source>
        <strain>BPEN</strain>
    </source>
</reference>
<protein>
    <recommendedName>
        <fullName evidence="1">Phosphate acyltransferase</fullName>
        <ecNumber evidence="1">2.3.1.274</ecNumber>
    </recommendedName>
    <alternativeName>
        <fullName evidence="1">Acyl-ACP phosphotransacylase</fullName>
    </alternativeName>
    <alternativeName>
        <fullName evidence="1">Acyl-[acyl-carrier-protein]--phosphate acyltransferase</fullName>
    </alternativeName>
    <alternativeName>
        <fullName evidence="1">Phosphate-acyl-ACP acyltransferase</fullName>
    </alternativeName>
</protein>
<proteinExistence type="inferred from homology"/>
<feature type="chain" id="PRO_0000329210" description="Phosphate acyltransferase">
    <location>
        <begin position="1"/>
        <end position="342"/>
    </location>
</feature>
<organism>
    <name type="scientific">Blochmanniella pennsylvanica (strain BPEN)</name>
    <dbReference type="NCBI Taxonomy" id="291272"/>
    <lineage>
        <taxon>Bacteria</taxon>
        <taxon>Pseudomonadati</taxon>
        <taxon>Pseudomonadota</taxon>
        <taxon>Gammaproteobacteria</taxon>
        <taxon>Enterobacterales</taxon>
        <taxon>Enterobacteriaceae</taxon>
        <taxon>ant endosymbionts</taxon>
        <taxon>Candidatus Blochmanniella</taxon>
    </lineage>
</organism>
<keyword id="KW-0963">Cytoplasm</keyword>
<keyword id="KW-0444">Lipid biosynthesis</keyword>
<keyword id="KW-0443">Lipid metabolism</keyword>
<keyword id="KW-0594">Phospholipid biosynthesis</keyword>
<keyword id="KW-1208">Phospholipid metabolism</keyword>
<keyword id="KW-1185">Reference proteome</keyword>
<keyword id="KW-0808">Transferase</keyword>
<gene>
    <name evidence="1" type="primary">plsX</name>
    <name type="ordered locus">BPEN_419</name>
</gene>
<accession>Q492Q3</accession>
<name>PLSX_BLOPB</name>
<evidence type="ECO:0000255" key="1">
    <source>
        <dbReference type="HAMAP-Rule" id="MF_00019"/>
    </source>
</evidence>
<sequence>MVIALDAMGGDFGPVVTVPASLQALSLYPKLRLLLVGNPDAILPILATSKSIGLDRLTVIPARSVISGDARPSQAIRVSKDTSMRVALELIKSGRAHACVSAGNTGALMGLSKLVLKSVHGIERPALTTLLPHQKQGKTVILDLGANISCDGAMLVQFAIMGSVLSKQILGVSNPRVALLNIGSEETKGLDNIRHASRILHTISSIHYVGYVEANDLLMGKTDVLVCDGFIGNITLKTMEGVIRVILSTLQSSEKKNKLNWFMQIINSWIRKYLFKQFNQFNPDWYNGAHLVGLRSTVIKSHGAANQHAFIAAITQAMHSVEREVPEKISHQLSTVLSKNNH</sequence>
<comment type="function">
    <text evidence="1">Catalyzes the reversible formation of acyl-phosphate (acyl-PO(4)) from acyl-[acyl-carrier-protein] (acyl-ACP). This enzyme utilizes acyl-ACP as fatty acyl donor, but not acyl-CoA.</text>
</comment>
<comment type="catalytic activity">
    <reaction evidence="1">
        <text>a fatty acyl-[ACP] + phosphate = an acyl phosphate + holo-[ACP]</text>
        <dbReference type="Rhea" id="RHEA:42292"/>
        <dbReference type="Rhea" id="RHEA-COMP:9685"/>
        <dbReference type="Rhea" id="RHEA-COMP:14125"/>
        <dbReference type="ChEBI" id="CHEBI:43474"/>
        <dbReference type="ChEBI" id="CHEBI:59918"/>
        <dbReference type="ChEBI" id="CHEBI:64479"/>
        <dbReference type="ChEBI" id="CHEBI:138651"/>
        <dbReference type="EC" id="2.3.1.274"/>
    </reaction>
</comment>
<comment type="pathway">
    <text evidence="1">Lipid metabolism; phospholipid metabolism.</text>
</comment>
<comment type="subunit">
    <text evidence="1">Homodimer. Probably interacts with PlsY.</text>
</comment>
<comment type="subcellular location">
    <subcellularLocation>
        <location evidence="1">Cytoplasm</location>
    </subcellularLocation>
    <text evidence="1">Associated with the membrane possibly through PlsY.</text>
</comment>
<comment type="similarity">
    <text evidence="1">Belongs to the PlsX family.</text>
</comment>